<accession>Q88DV8</accession>
<name>RBFA_PSEPK</name>
<proteinExistence type="inferred from homology"/>
<dbReference type="EMBL" id="AE015451">
    <property type="protein sequence ID" value="AAN70283.1"/>
    <property type="molecule type" value="Genomic_DNA"/>
</dbReference>
<dbReference type="RefSeq" id="NP_746819.1">
    <property type="nucleotide sequence ID" value="NC_002947.4"/>
</dbReference>
<dbReference type="RefSeq" id="WP_003249967.1">
    <property type="nucleotide sequence ID" value="NZ_CP169744.1"/>
</dbReference>
<dbReference type="SMR" id="Q88DV8"/>
<dbReference type="STRING" id="160488.PP_4711"/>
<dbReference type="PaxDb" id="160488-PP_4711"/>
<dbReference type="GeneID" id="83682425"/>
<dbReference type="KEGG" id="ppu:PP_4711"/>
<dbReference type="PATRIC" id="fig|160488.4.peg.5021"/>
<dbReference type="eggNOG" id="COG0858">
    <property type="taxonomic scope" value="Bacteria"/>
</dbReference>
<dbReference type="HOGENOM" id="CLU_089475_5_0_6"/>
<dbReference type="OrthoDB" id="307788at2"/>
<dbReference type="PhylomeDB" id="Q88DV8"/>
<dbReference type="BioCyc" id="PPUT160488:G1G01-5034-MONOMER"/>
<dbReference type="Proteomes" id="UP000000556">
    <property type="component" value="Chromosome"/>
</dbReference>
<dbReference type="GO" id="GO:0005829">
    <property type="term" value="C:cytosol"/>
    <property type="evidence" value="ECO:0007669"/>
    <property type="project" value="TreeGrafter"/>
</dbReference>
<dbReference type="GO" id="GO:0043024">
    <property type="term" value="F:ribosomal small subunit binding"/>
    <property type="evidence" value="ECO:0007669"/>
    <property type="project" value="TreeGrafter"/>
</dbReference>
<dbReference type="GO" id="GO:0030490">
    <property type="term" value="P:maturation of SSU-rRNA"/>
    <property type="evidence" value="ECO:0007669"/>
    <property type="project" value="UniProtKB-UniRule"/>
</dbReference>
<dbReference type="Gene3D" id="3.30.300.20">
    <property type="match status" value="1"/>
</dbReference>
<dbReference type="HAMAP" id="MF_00003">
    <property type="entry name" value="RbfA"/>
    <property type="match status" value="1"/>
</dbReference>
<dbReference type="InterPro" id="IPR015946">
    <property type="entry name" value="KH_dom-like_a/b"/>
</dbReference>
<dbReference type="InterPro" id="IPR000238">
    <property type="entry name" value="RbfA"/>
</dbReference>
<dbReference type="InterPro" id="IPR023799">
    <property type="entry name" value="RbfA_dom_sf"/>
</dbReference>
<dbReference type="InterPro" id="IPR020053">
    <property type="entry name" value="Ribosome-bd_factorA_CS"/>
</dbReference>
<dbReference type="NCBIfam" id="TIGR00082">
    <property type="entry name" value="rbfA"/>
    <property type="match status" value="1"/>
</dbReference>
<dbReference type="PANTHER" id="PTHR33515">
    <property type="entry name" value="RIBOSOME-BINDING FACTOR A, CHLOROPLASTIC-RELATED"/>
    <property type="match status" value="1"/>
</dbReference>
<dbReference type="PANTHER" id="PTHR33515:SF1">
    <property type="entry name" value="RIBOSOME-BINDING FACTOR A, CHLOROPLASTIC-RELATED"/>
    <property type="match status" value="1"/>
</dbReference>
<dbReference type="Pfam" id="PF02033">
    <property type="entry name" value="RBFA"/>
    <property type="match status" value="1"/>
</dbReference>
<dbReference type="SUPFAM" id="SSF89919">
    <property type="entry name" value="Ribosome-binding factor A, RbfA"/>
    <property type="match status" value="1"/>
</dbReference>
<dbReference type="PROSITE" id="PS01319">
    <property type="entry name" value="RBFA"/>
    <property type="match status" value="1"/>
</dbReference>
<keyword id="KW-0963">Cytoplasm</keyword>
<keyword id="KW-1185">Reference proteome</keyword>
<keyword id="KW-0690">Ribosome biogenesis</keyword>
<feature type="chain" id="PRO_0000102714" description="Ribosome-binding factor A">
    <location>
        <begin position="1"/>
        <end position="132"/>
    </location>
</feature>
<organism>
    <name type="scientific">Pseudomonas putida (strain ATCC 47054 / DSM 6125 / CFBP 8728 / NCIMB 11950 / KT2440)</name>
    <dbReference type="NCBI Taxonomy" id="160488"/>
    <lineage>
        <taxon>Bacteria</taxon>
        <taxon>Pseudomonadati</taxon>
        <taxon>Pseudomonadota</taxon>
        <taxon>Gammaproteobacteria</taxon>
        <taxon>Pseudomonadales</taxon>
        <taxon>Pseudomonadaceae</taxon>
        <taxon>Pseudomonas</taxon>
    </lineage>
</organism>
<sequence length="132" mass="14890">MAKEYSRTQRIGDQMQRELAELIRREVKDPRVGLVTITAVDVSRDLGHAKVFITVMGEETPDAVQQSLKALNSAASFLRLHLGRSMQLRSVPQLHFHFDESVSRGVHLSALIERAVAEDRLHKDADESDTKE</sequence>
<evidence type="ECO:0000255" key="1">
    <source>
        <dbReference type="HAMAP-Rule" id="MF_00003"/>
    </source>
</evidence>
<protein>
    <recommendedName>
        <fullName evidence="1">Ribosome-binding factor A</fullName>
    </recommendedName>
</protein>
<comment type="function">
    <text evidence="1">One of several proteins that assist in the late maturation steps of the functional core of the 30S ribosomal subunit. Associates with free 30S ribosomal subunits (but not with 30S subunits that are part of 70S ribosomes or polysomes). Required for efficient processing of 16S rRNA. May interact with the 5'-terminal helix region of 16S rRNA.</text>
</comment>
<comment type="subunit">
    <text evidence="1">Monomer. Binds 30S ribosomal subunits, but not 50S ribosomal subunits or 70S ribosomes.</text>
</comment>
<comment type="subcellular location">
    <subcellularLocation>
        <location evidence="1">Cytoplasm</location>
    </subcellularLocation>
</comment>
<comment type="similarity">
    <text evidence="1">Belongs to the RbfA family.</text>
</comment>
<gene>
    <name evidence="1" type="primary">rbfA</name>
    <name type="ordered locus">PP_4711</name>
</gene>
<reference key="1">
    <citation type="journal article" date="2002" name="Environ. Microbiol.">
        <title>Complete genome sequence and comparative analysis of the metabolically versatile Pseudomonas putida KT2440.</title>
        <authorList>
            <person name="Nelson K.E."/>
            <person name="Weinel C."/>
            <person name="Paulsen I.T."/>
            <person name="Dodson R.J."/>
            <person name="Hilbert H."/>
            <person name="Martins dos Santos V.A.P."/>
            <person name="Fouts D.E."/>
            <person name="Gill S.R."/>
            <person name="Pop M."/>
            <person name="Holmes M."/>
            <person name="Brinkac L.M."/>
            <person name="Beanan M.J."/>
            <person name="DeBoy R.T."/>
            <person name="Daugherty S.C."/>
            <person name="Kolonay J.F."/>
            <person name="Madupu R."/>
            <person name="Nelson W.C."/>
            <person name="White O."/>
            <person name="Peterson J.D."/>
            <person name="Khouri H.M."/>
            <person name="Hance I."/>
            <person name="Chris Lee P."/>
            <person name="Holtzapple E.K."/>
            <person name="Scanlan D."/>
            <person name="Tran K."/>
            <person name="Moazzez A."/>
            <person name="Utterback T.R."/>
            <person name="Rizzo M."/>
            <person name="Lee K."/>
            <person name="Kosack D."/>
            <person name="Moestl D."/>
            <person name="Wedler H."/>
            <person name="Lauber J."/>
            <person name="Stjepandic D."/>
            <person name="Hoheisel J."/>
            <person name="Straetz M."/>
            <person name="Heim S."/>
            <person name="Kiewitz C."/>
            <person name="Eisen J.A."/>
            <person name="Timmis K.N."/>
            <person name="Duesterhoeft A."/>
            <person name="Tuemmler B."/>
            <person name="Fraser C.M."/>
        </authorList>
    </citation>
    <scope>NUCLEOTIDE SEQUENCE [LARGE SCALE GENOMIC DNA]</scope>
    <source>
        <strain>ATCC 47054 / DSM 6125 / CFBP 8728 / NCIMB 11950 / KT2440</strain>
    </source>
</reference>